<gene>
    <name type="ordered locus">YGR079W</name>
</gene>
<sequence>MSSAANEGCVYLFIVVLRLSSFSCVNSFIHSFTRSRTRSSYSLDERSLVSYSIVYVAMNKSSKAFQVPNKVITKEDITPLSRSHTKKADTRGTADGKNTTASAVEATPIIITTARSIDTAGSLSENATEDDGTQNGDLHDDDDDDDLESTLGYSSEPDPLFSPCHQPSFTNSTFSYSADNELPMEENHNKNNFHDSSESSIFLPQIQQSFFFGDNSKSDANNTDFWKEVNGTAEEAICLQETRQRKCSLVALHPGDATTSSNDTLGIEDFIKDDINSAEAMEPSPSSSPSSSLLDNLDYNIKLLCYRDNEGKFTLKKRKFLKNSLRSSSAISKKWKPLSKRDKLLKRAIRRKSGVCQTLSAGFGIGEFML</sequence>
<organism>
    <name type="scientific">Saccharomyces cerevisiae (strain ATCC 204508 / S288c)</name>
    <name type="common">Baker's yeast</name>
    <dbReference type="NCBI Taxonomy" id="559292"/>
    <lineage>
        <taxon>Eukaryota</taxon>
        <taxon>Fungi</taxon>
        <taxon>Dikarya</taxon>
        <taxon>Ascomycota</taxon>
        <taxon>Saccharomycotina</taxon>
        <taxon>Saccharomycetes</taxon>
        <taxon>Saccharomycetales</taxon>
        <taxon>Saccharomycetaceae</taxon>
        <taxon>Saccharomyces</taxon>
    </lineage>
</organism>
<dbReference type="EMBL" id="Z72864">
    <property type="protein sequence ID" value="CAA97081.1"/>
    <property type="molecule type" value="Genomic_DNA"/>
</dbReference>
<dbReference type="EMBL" id="BK006941">
    <property type="protein sequence ID" value="DAA08172.1"/>
    <property type="molecule type" value="Genomic_DNA"/>
</dbReference>
<dbReference type="PIR" id="S64374">
    <property type="entry name" value="S64374"/>
</dbReference>
<dbReference type="RefSeq" id="NP_011593.1">
    <property type="nucleotide sequence ID" value="NM_001181208.1"/>
</dbReference>
<dbReference type="BioGRID" id="33321">
    <property type="interactions" value="60"/>
</dbReference>
<dbReference type="DIP" id="DIP-4840N"/>
<dbReference type="FunCoup" id="P53249">
    <property type="interactions" value="76"/>
</dbReference>
<dbReference type="IntAct" id="P53249">
    <property type="interactions" value="1"/>
</dbReference>
<dbReference type="STRING" id="4932.YGR079W"/>
<dbReference type="GlyGen" id="P53249">
    <property type="glycosylation" value="7 sites"/>
</dbReference>
<dbReference type="iPTMnet" id="P53249"/>
<dbReference type="PaxDb" id="4932-YGR079W"/>
<dbReference type="PeptideAtlas" id="P53249"/>
<dbReference type="TopDownProteomics" id="P53249"/>
<dbReference type="EnsemblFungi" id="YGR079W_mRNA">
    <property type="protein sequence ID" value="YGR079W"/>
    <property type="gene ID" value="YGR079W"/>
</dbReference>
<dbReference type="GeneID" id="852970"/>
<dbReference type="KEGG" id="sce:YGR079W"/>
<dbReference type="AGR" id="SGD:S000003311"/>
<dbReference type="SGD" id="S000003311">
    <property type="gene designation" value="YGR079W"/>
</dbReference>
<dbReference type="VEuPathDB" id="FungiDB:YGR079W"/>
<dbReference type="eggNOG" id="ENOG502S5S7">
    <property type="taxonomic scope" value="Eukaryota"/>
</dbReference>
<dbReference type="HOGENOM" id="CLU_063295_0_0_1"/>
<dbReference type="InParanoid" id="P53249"/>
<dbReference type="OMA" id="FWKNIET"/>
<dbReference type="OrthoDB" id="4069767at2759"/>
<dbReference type="BioCyc" id="YEAST:G3O-30791-MONOMER"/>
<dbReference type="BioGRID-ORCS" id="852970">
    <property type="hits" value="6 hits in 10 CRISPR screens"/>
</dbReference>
<dbReference type="PRO" id="PR:P53249"/>
<dbReference type="Proteomes" id="UP000002311">
    <property type="component" value="Chromosome VII"/>
</dbReference>
<dbReference type="RNAct" id="P53249">
    <property type="molecule type" value="protein"/>
</dbReference>
<reference key="1">
    <citation type="journal article" date="1997" name="Nature">
        <title>The nucleotide sequence of Saccharomyces cerevisiae chromosome VII.</title>
        <authorList>
            <person name="Tettelin H."/>
            <person name="Agostoni-Carbone M.L."/>
            <person name="Albermann K."/>
            <person name="Albers M."/>
            <person name="Arroyo J."/>
            <person name="Backes U."/>
            <person name="Barreiros T."/>
            <person name="Bertani I."/>
            <person name="Bjourson A.J."/>
            <person name="Brueckner M."/>
            <person name="Bruschi C.V."/>
            <person name="Carignani G."/>
            <person name="Castagnoli L."/>
            <person name="Cerdan E."/>
            <person name="Clemente M.L."/>
            <person name="Coblenz A."/>
            <person name="Coglievina M."/>
            <person name="Coissac E."/>
            <person name="Defoor E."/>
            <person name="Del Bino S."/>
            <person name="Delius H."/>
            <person name="Delneri D."/>
            <person name="de Wergifosse P."/>
            <person name="Dujon B."/>
            <person name="Durand P."/>
            <person name="Entian K.-D."/>
            <person name="Eraso P."/>
            <person name="Escribano V."/>
            <person name="Fabiani L."/>
            <person name="Fartmann B."/>
            <person name="Feroli F."/>
            <person name="Feuermann M."/>
            <person name="Frontali L."/>
            <person name="Garcia-Gonzalez M."/>
            <person name="Garcia-Saez M.I."/>
            <person name="Goffeau A."/>
            <person name="Guerreiro P."/>
            <person name="Hani J."/>
            <person name="Hansen M."/>
            <person name="Hebling U."/>
            <person name="Hernandez K."/>
            <person name="Heumann K."/>
            <person name="Hilger F."/>
            <person name="Hofmann B."/>
            <person name="Indge K.J."/>
            <person name="James C.M."/>
            <person name="Klima R."/>
            <person name="Koetter P."/>
            <person name="Kramer B."/>
            <person name="Kramer W."/>
            <person name="Lauquin G."/>
            <person name="Leuther H."/>
            <person name="Louis E.J."/>
            <person name="Maillier E."/>
            <person name="Marconi A."/>
            <person name="Martegani E."/>
            <person name="Mazon M.J."/>
            <person name="Mazzoni C."/>
            <person name="McReynolds A.D.K."/>
            <person name="Melchioretto P."/>
            <person name="Mewes H.-W."/>
            <person name="Minenkova O."/>
            <person name="Mueller-Auer S."/>
            <person name="Nawrocki A."/>
            <person name="Netter P."/>
            <person name="Neu R."/>
            <person name="Nombela C."/>
            <person name="Oliver S.G."/>
            <person name="Panzeri L."/>
            <person name="Paoluzi S."/>
            <person name="Plevani P."/>
            <person name="Portetelle D."/>
            <person name="Portillo F."/>
            <person name="Potier S."/>
            <person name="Purnelle B."/>
            <person name="Rieger M."/>
            <person name="Riles L."/>
            <person name="Rinaldi T."/>
            <person name="Robben J."/>
            <person name="Rodrigues-Pousada C."/>
            <person name="Rodriguez-Belmonte E."/>
            <person name="Rodriguez-Torres A.M."/>
            <person name="Rose M."/>
            <person name="Ruzzi M."/>
            <person name="Saliola M."/>
            <person name="Sanchez-Perez M."/>
            <person name="Schaefer B."/>
            <person name="Schaefer M."/>
            <person name="Scharfe M."/>
            <person name="Schmidheini T."/>
            <person name="Schreer A."/>
            <person name="Skala J."/>
            <person name="Souciet J.-L."/>
            <person name="Steensma H.Y."/>
            <person name="Talla E."/>
            <person name="Thierry A."/>
            <person name="Vandenbol M."/>
            <person name="van der Aart Q.J.M."/>
            <person name="Van Dyck L."/>
            <person name="Vanoni M."/>
            <person name="Verhasselt P."/>
            <person name="Voet M."/>
            <person name="Volckaert G."/>
            <person name="Wambutt R."/>
            <person name="Watson M.D."/>
            <person name="Weber N."/>
            <person name="Wedler E."/>
            <person name="Wedler H."/>
            <person name="Wipfli P."/>
            <person name="Wolf K."/>
            <person name="Wright L.F."/>
            <person name="Zaccaria P."/>
            <person name="Zimmermann M."/>
            <person name="Zollner A."/>
            <person name="Kleine K."/>
        </authorList>
    </citation>
    <scope>NUCLEOTIDE SEQUENCE [LARGE SCALE GENOMIC DNA]</scope>
    <source>
        <strain>ATCC 204508 / S288c</strain>
    </source>
</reference>
<reference key="2">
    <citation type="journal article" date="2014" name="G3 (Bethesda)">
        <title>The reference genome sequence of Saccharomyces cerevisiae: Then and now.</title>
        <authorList>
            <person name="Engel S.R."/>
            <person name="Dietrich F.S."/>
            <person name="Fisk D.G."/>
            <person name="Binkley G."/>
            <person name="Balakrishnan R."/>
            <person name="Costanzo M.C."/>
            <person name="Dwight S.S."/>
            <person name="Hitz B.C."/>
            <person name="Karra K."/>
            <person name="Nash R.S."/>
            <person name="Weng S."/>
            <person name="Wong E.D."/>
            <person name="Lloyd P."/>
            <person name="Skrzypek M.S."/>
            <person name="Miyasato S.R."/>
            <person name="Simison M."/>
            <person name="Cherry J.M."/>
        </authorList>
    </citation>
    <scope>GENOME REANNOTATION</scope>
    <source>
        <strain>ATCC 204508 / S288c</strain>
    </source>
</reference>
<protein>
    <recommendedName>
        <fullName>Putative uncharacterized protein YGR079W</fullName>
    </recommendedName>
</protein>
<name>YG2G_YEAST</name>
<proteinExistence type="inferred from homology"/>
<evidence type="ECO:0000255" key="1"/>
<evidence type="ECO:0000256" key="2">
    <source>
        <dbReference type="SAM" id="MobiDB-lite"/>
    </source>
</evidence>
<accession>P53249</accession>
<accession>D6VUL1</accession>
<feature type="signal peptide" evidence="1">
    <location>
        <begin position="1"/>
        <end position="27"/>
    </location>
</feature>
<feature type="chain" id="PRO_0000014322" description="Putative uncharacterized protein YGR079W">
    <location>
        <begin position="28"/>
        <end position="370"/>
    </location>
</feature>
<feature type="region of interest" description="Disordered" evidence="2">
    <location>
        <begin position="81"/>
        <end position="101"/>
    </location>
</feature>
<feature type="region of interest" description="Disordered" evidence="2">
    <location>
        <begin position="123"/>
        <end position="167"/>
    </location>
</feature>
<feature type="compositionally biased region" description="Acidic residues" evidence="2">
    <location>
        <begin position="139"/>
        <end position="148"/>
    </location>
</feature>
<feature type="glycosylation site" description="N-linked (GlcNAc...) asparagine" evidence="1">
    <location>
        <position position="59"/>
    </location>
</feature>
<feature type="glycosylation site" description="N-linked (GlcNAc...) asparagine" evidence="1">
    <location>
        <position position="98"/>
    </location>
</feature>
<feature type="glycosylation site" description="N-linked (GlcNAc...) asparagine" evidence="1">
    <location>
        <position position="126"/>
    </location>
</feature>
<feature type="glycosylation site" description="N-linked (GlcNAc...) asparagine" evidence="1">
    <location>
        <position position="171"/>
    </location>
</feature>
<feature type="glycosylation site" description="N-linked (GlcNAc...) asparagine" evidence="1">
    <location>
        <position position="221"/>
    </location>
</feature>
<feature type="glycosylation site" description="N-linked (GlcNAc...) asparagine" evidence="1">
    <location>
        <position position="230"/>
    </location>
</feature>
<feature type="glycosylation site" description="N-linked (GlcNAc...) asparagine" evidence="1">
    <location>
        <position position="262"/>
    </location>
</feature>
<keyword id="KW-0325">Glycoprotein</keyword>
<keyword id="KW-1185">Reference proteome</keyword>
<keyword id="KW-0732">Signal</keyword>